<name>RIMP_PSEP1</name>
<dbReference type="EMBL" id="CP000712">
    <property type="protein sequence ID" value="ABQ80699.1"/>
    <property type="molecule type" value="Genomic_DNA"/>
</dbReference>
<dbReference type="SMR" id="A5W989"/>
<dbReference type="KEGG" id="ppf:Pput_4579"/>
<dbReference type="eggNOG" id="COG0779">
    <property type="taxonomic scope" value="Bacteria"/>
</dbReference>
<dbReference type="HOGENOM" id="CLU_070525_1_1_6"/>
<dbReference type="GO" id="GO:0005829">
    <property type="term" value="C:cytosol"/>
    <property type="evidence" value="ECO:0007669"/>
    <property type="project" value="TreeGrafter"/>
</dbReference>
<dbReference type="GO" id="GO:0000028">
    <property type="term" value="P:ribosomal small subunit assembly"/>
    <property type="evidence" value="ECO:0007669"/>
    <property type="project" value="TreeGrafter"/>
</dbReference>
<dbReference type="GO" id="GO:0006412">
    <property type="term" value="P:translation"/>
    <property type="evidence" value="ECO:0007669"/>
    <property type="project" value="TreeGrafter"/>
</dbReference>
<dbReference type="CDD" id="cd01734">
    <property type="entry name" value="YlxS_C"/>
    <property type="match status" value="1"/>
</dbReference>
<dbReference type="FunFam" id="3.30.300.70:FF:000001">
    <property type="entry name" value="Ribosome maturation factor RimP"/>
    <property type="match status" value="1"/>
</dbReference>
<dbReference type="Gene3D" id="2.30.30.180">
    <property type="entry name" value="Ribosome maturation factor RimP, C-terminal domain"/>
    <property type="match status" value="1"/>
</dbReference>
<dbReference type="Gene3D" id="3.30.300.70">
    <property type="entry name" value="RimP-like superfamily, N-terminal"/>
    <property type="match status" value="1"/>
</dbReference>
<dbReference type="HAMAP" id="MF_01077">
    <property type="entry name" value="RimP"/>
    <property type="match status" value="1"/>
</dbReference>
<dbReference type="InterPro" id="IPR003728">
    <property type="entry name" value="Ribosome_maturation_RimP"/>
</dbReference>
<dbReference type="InterPro" id="IPR028998">
    <property type="entry name" value="RimP_C"/>
</dbReference>
<dbReference type="InterPro" id="IPR036847">
    <property type="entry name" value="RimP_C_sf"/>
</dbReference>
<dbReference type="InterPro" id="IPR028989">
    <property type="entry name" value="RimP_N"/>
</dbReference>
<dbReference type="InterPro" id="IPR035956">
    <property type="entry name" value="RimP_N_sf"/>
</dbReference>
<dbReference type="NCBIfam" id="NF000927">
    <property type="entry name" value="PRK00092.1-1"/>
    <property type="match status" value="1"/>
</dbReference>
<dbReference type="PANTHER" id="PTHR33867">
    <property type="entry name" value="RIBOSOME MATURATION FACTOR RIMP"/>
    <property type="match status" value="1"/>
</dbReference>
<dbReference type="PANTHER" id="PTHR33867:SF1">
    <property type="entry name" value="RIBOSOME MATURATION FACTOR RIMP"/>
    <property type="match status" value="1"/>
</dbReference>
<dbReference type="Pfam" id="PF17384">
    <property type="entry name" value="DUF150_C"/>
    <property type="match status" value="1"/>
</dbReference>
<dbReference type="Pfam" id="PF02576">
    <property type="entry name" value="RimP_N"/>
    <property type="match status" value="1"/>
</dbReference>
<dbReference type="SUPFAM" id="SSF74942">
    <property type="entry name" value="YhbC-like, C-terminal domain"/>
    <property type="match status" value="1"/>
</dbReference>
<dbReference type="SUPFAM" id="SSF75420">
    <property type="entry name" value="YhbC-like, N-terminal domain"/>
    <property type="match status" value="1"/>
</dbReference>
<gene>
    <name evidence="1" type="primary">rimP</name>
    <name type="ordered locus">Pput_4579</name>
</gene>
<accession>A5W989</accession>
<protein>
    <recommendedName>
        <fullName evidence="1">Ribosome maturation factor RimP</fullName>
    </recommendedName>
</protein>
<proteinExistence type="inferred from homology"/>
<comment type="function">
    <text evidence="1">Required for maturation of 30S ribosomal subunits.</text>
</comment>
<comment type="subcellular location">
    <subcellularLocation>
        <location evidence="1">Cytoplasm</location>
    </subcellularLocation>
</comment>
<comment type="similarity">
    <text evidence="1">Belongs to the RimP family.</text>
</comment>
<reference key="1">
    <citation type="submission" date="2007-05" db="EMBL/GenBank/DDBJ databases">
        <title>Complete sequence of Pseudomonas putida F1.</title>
        <authorList>
            <consortium name="US DOE Joint Genome Institute"/>
            <person name="Copeland A."/>
            <person name="Lucas S."/>
            <person name="Lapidus A."/>
            <person name="Barry K."/>
            <person name="Detter J.C."/>
            <person name="Glavina del Rio T."/>
            <person name="Hammon N."/>
            <person name="Israni S."/>
            <person name="Dalin E."/>
            <person name="Tice H."/>
            <person name="Pitluck S."/>
            <person name="Chain P."/>
            <person name="Malfatti S."/>
            <person name="Shin M."/>
            <person name="Vergez L."/>
            <person name="Schmutz J."/>
            <person name="Larimer F."/>
            <person name="Land M."/>
            <person name="Hauser L."/>
            <person name="Kyrpides N."/>
            <person name="Lykidis A."/>
            <person name="Parales R."/>
            <person name="Richardson P."/>
        </authorList>
    </citation>
    <scope>NUCLEOTIDE SEQUENCE [LARGE SCALE GENOMIC DNA]</scope>
    <source>
        <strain>ATCC 700007 / DSM 6899 / JCM 31910 / BCRC 17059 / LMG 24140 / F1</strain>
    </source>
</reference>
<feature type="chain" id="PRO_0000384739" description="Ribosome maturation factor RimP">
    <location>
        <begin position="1"/>
        <end position="169"/>
    </location>
</feature>
<keyword id="KW-0963">Cytoplasm</keyword>
<keyword id="KW-0690">Ribosome biogenesis</keyword>
<evidence type="ECO:0000255" key="1">
    <source>
        <dbReference type="HAMAP-Rule" id="MF_01077"/>
    </source>
</evidence>
<organism>
    <name type="scientific">Pseudomonas putida (strain ATCC 700007 / DSM 6899 / JCM 31910 / BCRC 17059 / LMG 24140 / F1)</name>
    <dbReference type="NCBI Taxonomy" id="351746"/>
    <lineage>
        <taxon>Bacteria</taxon>
        <taxon>Pseudomonadati</taxon>
        <taxon>Pseudomonadota</taxon>
        <taxon>Gammaproteobacteria</taxon>
        <taxon>Pseudomonadales</taxon>
        <taxon>Pseudomonadaceae</taxon>
        <taxon>Pseudomonas</taxon>
    </lineage>
</organism>
<sequence length="169" mass="18765">MGASPIFYLHSMHEGVQVSSKLEQLQALLAPVVEGLGYQCWGIEYVSQGKHSVLRIYIDKEGGILVDDCEAVSRQASAILDVEDPISSEYTLEVSSPGMDRPLFTLEQFASHAGEQVKIKLRSPFEGRRNFQGLLRGVEEQDVVVQVDNQEFLLPIDSIDKANIIPSFD</sequence>